<organism>
    <name type="scientific">Pseudomonas aeruginosa (strain ATCC 15692 / DSM 22644 / CIP 104116 / JCM 14847 / LMG 12228 / 1C / PRS 101 / PAO1)</name>
    <dbReference type="NCBI Taxonomy" id="208964"/>
    <lineage>
        <taxon>Bacteria</taxon>
        <taxon>Pseudomonadati</taxon>
        <taxon>Pseudomonadota</taxon>
        <taxon>Gammaproteobacteria</taxon>
        <taxon>Pseudomonadales</taxon>
        <taxon>Pseudomonadaceae</taxon>
        <taxon>Pseudomonas</taxon>
    </lineage>
</organism>
<dbReference type="EC" id="1.3.1.-" evidence="1"/>
<dbReference type="EMBL" id="AE004091">
    <property type="protein sequence ID" value="AAG08237.1"/>
    <property type="molecule type" value="Genomic_DNA"/>
</dbReference>
<dbReference type="PIR" id="D83040">
    <property type="entry name" value="D83040"/>
</dbReference>
<dbReference type="RefSeq" id="NP_253539.1">
    <property type="nucleotide sequence ID" value="NC_002516.2"/>
</dbReference>
<dbReference type="RefSeq" id="WP_003095402.1">
    <property type="nucleotide sequence ID" value="NZ_QZGE01000002.1"/>
</dbReference>
<dbReference type="SMR" id="Q9HUW1"/>
<dbReference type="FunCoup" id="Q9HUW1">
    <property type="interactions" value="629"/>
</dbReference>
<dbReference type="STRING" id="208964.PA4852"/>
<dbReference type="PaxDb" id="208964-PA4852"/>
<dbReference type="DNASU" id="878659"/>
<dbReference type="GeneID" id="878659"/>
<dbReference type="KEGG" id="pae:PA4852"/>
<dbReference type="PATRIC" id="fig|208964.12.peg.5084"/>
<dbReference type="PseudoCAP" id="PA4852"/>
<dbReference type="HOGENOM" id="CLU_013299_0_1_6"/>
<dbReference type="InParanoid" id="Q9HUW1"/>
<dbReference type="OrthoDB" id="9764501at2"/>
<dbReference type="PhylomeDB" id="Q9HUW1"/>
<dbReference type="BioCyc" id="PAER208964:G1FZ6-4966-MONOMER"/>
<dbReference type="Proteomes" id="UP000002438">
    <property type="component" value="Chromosome"/>
</dbReference>
<dbReference type="GO" id="GO:0050660">
    <property type="term" value="F:flavin adenine dinucleotide binding"/>
    <property type="evidence" value="ECO:0007669"/>
    <property type="project" value="InterPro"/>
</dbReference>
<dbReference type="GO" id="GO:0010181">
    <property type="term" value="F:FMN binding"/>
    <property type="evidence" value="ECO:0007669"/>
    <property type="project" value="UniProtKB-UniRule"/>
</dbReference>
<dbReference type="GO" id="GO:0000049">
    <property type="term" value="F:tRNA binding"/>
    <property type="evidence" value="ECO:0007669"/>
    <property type="project" value="UniProtKB-UniRule"/>
</dbReference>
<dbReference type="GO" id="GO:0017150">
    <property type="term" value="F:tRNA dihydrouridine synthase activity"/>
    <property type="evidence" value="ECO:0007669"/>
    <property type="project" value="UniProtKB-UniRule"/>
</dbReference>
<dbReference type="CDD" id="cd02801">
    <property type="entry name" value="DUS_like_FMN"/>
    <property type="match status" value="1"/>
</dbReference>
<dbReference type="Gene3D" id="3.20.20.70">
    <property type="entry name" value="Aldolase class I"/>
    <property type="match status" value="1"/>
</dbReference>
<dbReference type="Gene3D" id="1.10.1200.80">
    <property type="entry name" value="Putative flavin oxidoreducatase, domain 2"/>
    <property type="match status" value="1"/>
</dbReference>
<dbReference type="HAMAP" id="MF_02042">
    <property type="entry name" value="DusB_subfam"/>
    <property type="match status" value="1"/>
</dbReference>
<dbReference type="InterPro" id="IPR013785">
    <property type="entry name" value="Aldolase_TIM"/>
</dbReference>
<dbReference type="InterPro" id="IPR035587">
    <property type="entry name" value="DUS-like_FMN-bd"/>
</dbReference>
<dbReference type="InterPro" id="IPR001269">
    <property type="entry name" value="DUS_fam"/>
</dbReference>
<dbReference type="InterPro" id="IPR032887">
    <property type="entry name" value="DusB"/>
</dbReference>
<dbReference type="InterPro" id="IPR004652">
    <property type="entry name" value="DusB-like"/>
</dbReference>
<dbReference type="InterPro" id="IPR024036">
    <property type="entry name" value="tRNA-dHydroUridine_Synthase_C"/>
</dbReference>
<dbReference type="InterPro" id="IPR018517">
    <property type="entry name" value="tRNA_hU_synthase_CS"/>
</dbReference>
<dbReference type="NCBIfam" id="TIGR00737">
    <property type="entry name" value="nifR3_yhdG"/>
    <property type="match status" value="1"/>
</dbReference>
<dbReference type="PANTHER" id="PTHR45846">
    <property type="entry name" value="TRNA-DIHYDROURIDINE(47) SYNTHASE [NAD(P)(+)]-LIKE"/>
    <property type="match status" value="1"/>
</dbReference>
<dbReference type="PANTHER" id="PTHR45846:SF1">
    <property type="entry name" value="TRNA-DIHYDROURIDINE(47) SYNTHASE [NAD(P)(+)]-LIKE"/>
    <property type="match status" value="1"/>
</dbReference>
<dbReference type="Pfam" id="PF01207">
    <property type="entry name" value="Dus"/>
    <property type="match status" value="1"/>
</dbReference>
<dbReference type="PIRSF" id="PIRSF006621">
    <property type="entry name" value="Dus"/>
    <property type="match status" value="1"/>
</dbReference>
<dbReference type="SUPFAM" id="SSF51395">
    <property type="entry name" value="FMN-linked oxidoreductases"/>
    <property type="match status" value="1"/>
</dbReference>
<dbReference type="PROSITE" id="PS01136">
    <property type="entry name" value="UPF0034"/>
    <property type="match status" value="1"/>
</dbReference>
<protein>
    <recommendedName>
        <fullName evidence="1">tRNA-dihydrouridine synthase B</fullName>
        <ecNumber evidence="1">1.3.1.-</ecNumber>
    </recommendedName>
</protein>
<comment type="function">
    <text evidence="1">Catalyzes the synthesis of 5,6-dihydrouridine (D), a modified base found in the D-loop of most tRNAs, via the reduction of the C5-C6 double bond in target uridines.</text>
</comment>
<comment type="catalytic activity">
    <reaction evidence="1">
        <text>a 5,6-dihydrouridine in tRNA + NAD(+) = a uridine in tRNA + NADH + H(+)</text>
        <dbReference type="Rhea" id="RHEA:54452"/>
        <dbReference type="Rhea" id="RHEA-COMP:13339"/>
        <dbReference type="Rhea" id="RHEA-COMP:13887"/>
        <dbReference type="ChEBI" id="CHEBI:15378"/>
        <dbReference type="ChEBI" id="CHEBI:57540"/>
        <dbReference type="ChEBI" id="CHEBI:57945"/>
        <dbReference type="ChEBI" id="CHEBI:65315"/>
        <dbReference type="ChEBI" id="CHEBI:74443"/>
    </reaction>
</comment>
<comment type="catalytic activity">
    <reaction evidence="1">
        <text>a 5,6-dihydrouridine in tRNA + NADP(+) = a uridine in tRNA + NADPH + H(+)</text>
        <dbReference type="Rhea" id="RHEA:23624"/>
        <dbReference type="Rhea" id="RHEA-COMP:13339"/>
        <dbReference type="Rhea" id="RHEA-COMP:13887"/>
        <dbReference type="ChEBI" id="CHEBI:15378"/>
        <dbReference type="ChEBI" id="CHEBI:57783"/>
        <dbReference type="ChEBI" id="CHEBI:58349"/>
        <dbReference type="ChEBI" id="CHEBI:65315"/>
        <dbReference type="ChEBI" id="CHEBI:74443"/>
    </reaction>
</comment>
<comment type="cofactor">
    <cofactor evidence="1">
        <name>FMN</name>
        <dbReference type="ChEBI" id="CHEBI:58210"/>
    </cofactor>
</comment>
<comment type="similarity">
    <text evidence="1">Belongs to the Dus family. DusB subfamily.</text>
</comment>
<feature type="chain" id="PRO_0000162093" description="tRNA-dihydrouridine synthase B">
    <location>
        <begin position="1"/>
        <end position="332"/>
    </location>
</feature>
<feature type="active site" description="Proton donor" evidence="1">
    <location>
        <position position="103"/>
    </location>
</feature>
<feature type="binding site" evidence="1">
    <location>
        <begin position="19"/>
        <end position="21"/>
    </location>
    <ligand>
        <name>FMN</name>
        <dbReference type="ChEBI" id="CHEBI:58210"/>
    </ligand>
</feature>
<feature type="binding site" evidence="1">
    <location>
        <position position="73"/>
    </location>
    <ligand>
        <name>FMN</name>
        <dbReference type="ChEBI" id="CHEBI:58210"/>
    </ligand>
</feature>
<feature type="binding site" evidence="1">
    <location>
        <position position="142"/>
    </location>
    <ligand>
        <name>FMN</name>
        <dbReference type="ChEBI" id="CHEBI:58210"/>
    </ligand>
</feature>
<feature type="binding site" evidence="1">
    <location>
        <begin position="203"/>
        <end position="205"/>
    </location>
    <ligand>
        <name>FMN</name>
        <dbReference type="ChEBI" id="CHEBI:58210"/>
    </ligand>
</feature>
<feature type="binding site" evidence="1">
    <location>
        <begin position="227"/>
        <end position="228"/>
    </location>
    <ligand>
        <name>FMN</name>
        <dbReference type="ChEBI" id="CHEBI:58210"/>
    </ligand>
</feature>
<keyword id="KW-0285">Flavoprotein</keyword>
<keyword id="KW-0288">FMN</keyword>
<keyword id="KW-0521">NADP</keyword>
<keyword id="KW-0560">Oxidoreductase</keyword>
<keyword id="KW-1185">Reference proteome</keyword>
<keyword id="KW-0694">RNA-binding</keyword>
<keyword id="KW-0819">tRNA processing</keyword>
<keyword id="KW-0820">tRNA-binding</keyword>
<reference key="1">
    <citation type="journal article" date="2000" name="Nature">
        <title>Complete genome sequence of Pseudomonas aeruginosa PAO1, an opportunistic pathogen.</title>
        <authorList>
            <person name="Stover C.K."/>
            <person name="Pham X.-Q.T."/>
            <person name="Erwin A.L."/>
            <person name="Mizoguchi S.D."/>
            <person name="Warrener P."/>
            <person name="Hickey M.J."/>
            <person name="Brinkman F.S.L."/>
            <person name="Hufnagle W.O."/>
            <person name="Kowalik D.J."/>
            <person name="Lagrou M."/>
            <person name="Garber R.L."/>
            <person name="Goltry L."/>
            <person name="Tolentino E."/>
            <person name="Westbrock-Wadman S."/>
            <person name="Yuan Y."/>
            <person name="Brody L.L."/>
            <person name="Coulter S.N."/>
            <person name="Folger K.R."/>
            <person name="Kas A."/>
            <person name="Larbig K."/>
            <person name="Lim R.M."/>
            <person name="Smith K.A."/>
            <person name="Spencer D.H."/>
            <person name="Wong G.K.-S."/>
            <person name="Wu Z."/>
            <person name="Paulsen I.T."/>
            <person name="Reizer J."/>
            <person name="Saier M.H. Jr."/>
            <person name="Hancock R.E.W."/>
            <person name="Lory S."/>
            <person name="Olson M.V."/>
        </authorList>
    </citation>
    <scope>NUCLEOTIDE SEQUENCE [LARGE SCALE GENOMIC DNA]</scope>
    <source>
        <strain>ATCC 15692 / DSM 22644 / CIP 104116 / JCM 14847 / LMG 12228 / 1C / PRS 101 / PAO1</strain>
    </source>
</reference>
<gene>
    <name evidence="1" type="primary">dusB</name>
    <name type="ordered locus">PA4852</name>
</gene>
<evidence type="ECO:0000255" key="1">
    <source>
        <dbReference type="HAMAP-Rule" id="MF_02042"/>
    </source>
</evidence>
<accession>Q9HUW1</accession>
<proteinExistence type="inferred from homology"/>
<sequence>MSVVRIGPYTLPNRLILAPMAGVTDRPFRQLCRRLGAGMVVSEMVTSDVRLWNSRKSRLRLIHDGEDEPRSVQIAGGDPAMLAEAAQRNVELGAQIIDINMGCPAKKVCNKAAGSALLRDEALVAEILDAVVRAVDVPVTLKIRTGWDRDNRNGVTVAKLAEQAGIQALAVHGRTRADLYTGEAEYETIAAIKQAVSIPVFANGDIDSPEKARKVIEQTGVDALLIGRAAQGRPWIFREIDHYLRTGEHLPAAPLPEVQSILLEHLAELHLFYGEEMGVRIARKHVGWYLATLPGAREFRAQFNRLQDTDAQCASVRQFFAERQNNGTGVAA</sequence>
<name>DUSB_PSEAE</name>